<protein>
    <recommendedName>
        <fullName>Probable cytochrome P450 517A4</fullName>
        <ecNumber>1.14.-.-</ecNumber>
    </recommendedName>
</protein>
<feature type="chain" id="PRO_0000318829" description="Probable cytochrome P450 517A4">
    <location>
        <begin position="1"/>
        <end position="483"/>
    </location>
</feature>
<feature type="transmembrane region" description="Helical" evidence="2">
    <location>
        <begin position="1"/>
        <end position="21"/>
    </location>
</feature>
<feature type="binding site" description="axial binding residue" evidence="1">
    <location>
        <position position="429"/>
    </location>
    <ligand>
        <name>heme</name>
        <dbReference type="ChEBI" id="CHEBI:30413"/>
    </ligand>
    <ligandPart>
        <name>Fe</name>
        <dbReference type="ChEBI" id="CHEBI:18248"/>
    </ligandPart>
</feature>
<gene>
    <name type="primary">cyp517A4</name>
    <name type="ORF">DDB_G0283933</name>
</gene>
<evidence type="ECO:0000250" key="1"/>
<evidence type="ECO:0000255" key="2"/>
<evidence type="ECO:0000305" key="3"/>
<name>C5174_DICDI</name>
<sequence length="483" mass="55752">MEIVNVLLFLIILFLVKDFVKKNKKIHTKSPSGPIAFPILGNVVQIRFWELFKIQEHELIGNYSKKYNGVVRAWIGERLFLFVSNYDVVKYFQKDENFLYRPSLLVPGWRYASSNGLGVMSSSDDEWKRAKSSVSQSLRVHTSKKLMEEKAIEFIDSLEKISNNNEIFYPKGHIQGYACSMLFKYMFNQDLSVESGMSRTIGNAVEHVFGNLSKLTAFDCFEIFSPLYDWFFTRRLKGCDIVRQIISSQNENHLKSIDPSKPRDLMDDLLIEYGLNEITKEDTMQINQICFDIFGPAVGTVTITMNWVILQLCNRPELQEIAYQEIKKAVKDDEYVNLNHKQNAPYIVAFIKETMRLCSNGFGLPRTAKNDQICGDFFIPKDAIIFINYLEISQNEEIFKNAKEFNPTRYLDESLPVPNIHFGVGQRACPGRFVAIDKMFLGISNLLLKYKLKSQNGEKIDDTIHFSVSLKAKDYGIKLEKRI</sequence>
<dbReference type="EC" id="1.14.-.-"/>
<dbReference type="EMBL" id="AAFI02000058">
    <property type="protein sequence ID" value="EAL65454.1"/>
    <property type="molecule type" value="Genomic_DNA"/>
</dbReference>
<dbReference type="RefSeq" id="XP_638814.1">
    <property type="nucleotide sequence ID" value="XM_633722.1"/>
</dbReference>
<dbReference type="SMR" id="Q54QD0"/>
<dbReference type="FunCoup" id="Q54QD0">
    <property type="interactions" value="5"/>
</dbReference>
<dbReference type="STRING" id="44689.Q54QD0"/>
<dbReference type="PaxDb" id="44689-DDB0233016"/>
<dbReference type="EnsemblProtists" id="EAL65454">
    <property type="protein sequence ID" value="EAL65454"/>
    <property type="gene ID" value="DDB_G0283933"/>
</dbReference>
<dbReference type="GeneID" id="8624338"/>
<dbReference type="KEGG" id="ddi:DDB_G0283933"/>
<dbReference type="dictyBase" id="DDB_G0283933">
    <property type="gene designation" value="cyp517A4"/>
</dbReference>
<dbReference type="VEuPathDB" id="AmoebaDB:DDB_G0283933"/>
<dbReference type="eggNOG" id="KOG0156">
    <property type="taxonomic scope" value="Eukaryota"/>
</dbReference>
<dbReference type="HOGENOM" id="CLU_001570_22_0_1"/>
<dbReference type="InParanoid" id="Q54QD0"/>
<dbReference type="OMA" id="FANRPAC"/>
<dbReference type="PhylomeDB" id="Q54QD0"/>
<dbReference type="Reactome" id="R-DDI-211935">
    <property type="pathway name" value="Fatty acids"/>
</dbReference>
<dbReference type="Reactome" id="R-DDI-211945">
    <property type="pathway name" value="Phase I - Functionalization of compounds"/>
</dbReference>
<dbReference type="Reactome" id="R-DDI-211958">
    <property type="pathway name" value="Miscellaneous substrates"/>
</dbReference>
<dbReference type="Reactome" id="R-DDI-211981">
    <property type="pathway name" value="Xenobiotics"/>
</dbReference>
<dbReference type="Reactome" id="R-DDI-211999">
    <property type="pathway name" value="CYP2E1 reactions"/>
</dbReference>
<dbReference type="Reactome" id="R-DDI-2142670">
    <property type="pathway name" value="Synthesis of epoxy (EET) and dihydroxyeicosatrienoic acids (DHET)"/>
</dbReference>
<dbReference type="Reactome" id="R-DDI-2142816">
    <property type="pathway name" value="Synthesis of (16-20)-hydroxyeicosatetraenoic acids (HETE)"/>
</dbReference>
<dbReference type="Reactome" id="R-DDI-5423646">
    <property type="pathway name" value="Aflatoxin activation and detoxification"/>
</dbReference>
<dbReference type="Reactome" id="R-DDI-9027307">
    <property type="pathway name" value="Biosynthesis of maresin-like SPMs"/>
</dbReference>
<dbReference type="Reactome" id="R-DDI-9749641">
    <property type="pathway name" value="Aspirin ADME"/>
</dbReference>
<dbReference type="Reactome" id="R-DDI-9753281">
    <property type="pathway name" value="Paracetamol ADME"/>
</dbReference>
<dbReference type="PRO" id="PR:Q54QD0"/>
<dbReference type="Proteomes" id="UP000002195">
    <property type="component" value="Chromosome 4"/>
</dbReference>
<dbReference type="GO" id="GO:0016020">
    <property type="term" value="C:membrane"/>
    <property type="evidence" value="ECO:0007669"/>
    <property type="project" value="UniProtKB-SubCell"/>
</dbReference>
<dbReference type="GO" id="GO:0020037">
    <property type="term" value="F:heme binding"/>
    <property type="evidence" value="ECO:0007669"/>
    <property type="project" value="InterPro"/>
</dbReference>
<dbReference type="GO" id="GO:0005506">
    <property type="term" value="F:iron ion binding"/>
    <property type="evidence" value="ECO:0007669"/>
    <property type="project" value="InterPro"/>
</dbReference>
<dbReference type="GO" id="GO:0004497">
    <property type="term" value="F:monooxygenase activity"/>
    <property type="evidence" value="ECO:0007669"/>
    <property type="project" value="UniProtKB-KW"/>
</dbReference>
<dbReference type="GO" id="GO:0016705">
    <property type="term" value="F:oxidoreductase activity, acting on paired donors, with incorporation or reduction of molecular oxygen"/>
    <property type="evidence" value="ECO:0007669"/>
    <property type="project" value="InterPro"/>
</dbReference>
<dbReference type="CDD" id="cd20617">
    <property type="entry name" value="CYP1_2-like"/>
    <property type="match status" value="1"/>
</dbReference>
<dbReference type="FunFam" id="1.10.630.10:FF:000078">
    <property type="entry name" value="Probable cytochrome P450 515A1"/>
    <property type="match status" value="1"/>
</dbReference>
<dbReference type="Gene3D" id="1.10.630.10">
    <property type="entry name" value="Cytochrome P450"/>
    <property type="match status" value="1"/>
</dbReference>
<dbReference type="InterPro" id="IPR001128">
    <property type="entry name" value="Cyt_P450"/>
</dbReference>
<dbReference type="InterPro" id="IPR017972">
    <property type="entry name" value="Cyt_P450_CS"/>
</dbReference>
<dbReference type="InterPro" id="IPR002401">
    <property type="entry name" value="Cyt_P450_E_grp-I"/>
</dbReference>
<dbReference type="InterPro" id="IPR036396">
    <property type="entry name" value="Cyt_P450_sf"/>
</dbReference>
<dbReference type="PANTHER" id="PTHR24303:SF31">
    <property type="entry name" value="CYTOCHROME P450 307A1-RELATED"/>
    <property type="match status" value="1"/>
</dbReference>
<dbReference type="PANTHER" id="PTHR24303">
    <property type="entry name" value="HEME-BINDING MONOOXYGENASE FAMILY"/>
    <property type="match status" value="1"/>
</dbReference>
<dbReference type="Pfam" id="PF00067">
    <property type="entry name" value="p450"/>
    <property type="match status" value="1"/>
</dbReference>
<dbReference type="PRINTS" id="PR00463">
    <property type="entry name" value="EP450I"/>
</dbReference>
<dbReference type="SUPFAM" id="SSF48264">
    <property type="entry name" value="Cytochrome P450"/>
    <property type="match status" value="1"/>
</dbReference>
<dbReference type="PROSITE" id="PS00086">
    <property type="entry name" value="CYTOCHROME_P450"/>
    <property type="match status" value="1"/>
</dbReference>
<organism>
    <name type="scientific">Dictyostelium discoideum</name>
    <name type="common">Social amoeba</name>
    <dbReference type="NCBI Taxonomy" id="44689"/>
    <lineage>
        <taxon>Eukaryota</taxon>
        <taxon>Amoebozoa</taxon>
        <taxon>Evosea</taxon>
        <taxon>Eumycetozoa</taxon>
        <taxon>Dictyostelia</taxon>
        <taxon>Dictyosteliales</taxon>
        <taxon>Dictyosteliaceae</taxon>
        <taxon>Dictyostelium</taxon>
    </lineage>
</organism>
<proteinExistence type="inferred from homology"/>
<accession>Q54QD0</accession>
<comment type="cofactor">
    <cofactor evidence="1">
        <name>heme</name>
        <dbReference type="ChEBI" id="CHEBI:30413"/>
    </cofactor>
</comment>
<comment type="subcellular location">
    <subcellularLocation>
        <location evidence="3">Membrane</location>
        <topology evidence="3">Single-pass membrane protein</topology>
    </subcellularLocation>
</comment>
<comment type="similarity">
    <text evidence="3">Belongs to the cytochrome P450 family.</text>
</comment>
<reference key="1">
    <citation type="journal article" date="2005" name="Nature">
        <title>The genome of the social amoeba Dictyostelium discoideum.</title>
        <authorList>
            <person name="Eichinger L."/>
            <person name="Pachebat J.A."/>
            <person name="Gloeckner G."/>
            <person name="Rajandream M.A."/>
            <person name="Sucgang R."/>
            <person name="Berriman M."/>
            <person name="Song J."/>
            <person name="Olsen R."/>
            <person name="Szafranski K."/>
            <person name="Xu Q."/>
            <person name="Tunggal B."/>
            <person name="Kummerfeld S."/>
            <person name="Madera M."/>
            <person name="Konfortov B.A."/>
            <person name="Rivero F."/>
            <person name="Bankier A.T."/>
            <person name="Lehmann R."/>
            <person name="Hamlin N."/>
            <person name="Davies R."/>
            <person name="Gaudet P."/>
            <person name="Fey P."/>
            <person name="Pilcher K."/>
            <person name="Chen G."/>
            <person name="Saunders D."/>
            <person name="Sodergren E.J."/>
            <person name="Davis P."/>
            <person name="Kerhornou A."/>
            <person name="Nie X."/>
            <person name="Hall N."/>
            <person name="Anjard C."/>
            <person name="Hemphill L."/>
            <person name="Bason N."/>
            <person name="Farbrother P."/>
            <person name="Desany B."/>
            <person name="Just E."/>
            <person name="Morio T."/>
            <person name="Rost R."/>
            <person name="Churcher C.M."/>
            <person name="Cooper J."/>
            <person name="Haydock S."/>
            <person name="van Driessche N."/>
            <person name="Cronin A."/>
            <person name="Goodhead I."/>
            <person name="Muzny D.M."/>
            <person name="Mourier T."/>
            <person name="Pain A."/>
            <person name="Lu M."/>
            <person name="Harper D."/>
            <person name="Lindsay R."/>
            <person name="Hauser H."/>
            <person name="James K.D."/>
            <person name="Quiles M."/>
            <person name="Madan Babu M."/>
            <person name="Saito T."/>
            <person name="Buchrieser C."/>
            <person name="Wardroper A."/>
            <person name="Felder M."/>
            <person name="Thangavelu M."/>
            <person name="Johnson D."/>
            <person name="Knights A."/>
            <person name="Loulseged H."/>
            <person name="Mungall K.L."/>
            <person name="Oliver K."/>
            <person name="Price C."/>
            <person name="Quail M.A."/>
            <person name="Urushihara H."/>
            <person name="Hernandez J."/>
            <person name="Rabbinowitsch E."/>
            <person name="Steffen D."/>
            <person name="Sanders M."/>
            <person name="Ma J."/>
            <person name="Kohara Y."/>
            <person name="Sharp S."/>
            <person name="Simmonds M.N."/>
            <person name="Spiegler S."/>
            <person name="Tivey A."/>
            <person name="Sugano S."/>
            <person name="White B."/>
            <person name="Walker D."/>
            <person name="Woodward J.R."/>
            <person name="Winckler T."/>
            <person name="Tanaka Y."/>
            <person name="Shaulsky G."/>
            <person name="Schleicher M."/>
            <person name="Weinstock G.M."/>
            <person name="Rosenthal A."/>
            <person name="Cox E.C."/>
            <person name="Chisholm R.L."/>
            <person name="Gibbs R.A."/>
            <person name="Loomis W.F."/>
            <person name="Platzer M."/>
            <person name="Kay R.R."/>
            <person name="Williams J.G."/>
            <person name="Dear P.H."/>
            <person name="Noegel A.A."/>
            <person name="Barrell B.G."/>
            <person name="Kuspa A."/>
        </authorList>
    </citation>
    <scope>NUCLEOTIDE SEQUENCE [LARGE SCALE GENOMIC DNA]</scope>
    <source>
        <strain>AX4</strain>
    </source>
</reference>
<keyword id="KW-0349">Heme</keyword>
<keyword id="KW-0408">Iron</keyword>
<keyword id="KW-0472">Membrane</keyword>
<keyword id="KW-0479">Metal-binding</keyword>
<keyword id="KW-0503">Monooxygenase</keyword>
<keyword id="KW-0560">Oxidoreductase</keyword>
<keyword id="KW-1185">Reference proteome</keyword>
<keyword id="KW-0812">Transmembrane</keyword>
<keyword id="KW-1133">Transmembrane helix</keyword>